<protein>
    <recommendedName>
        <fullName evidence="1">Eukaryotic translation initiation factor 3 subunit M</fullName>
        <shortName evidence="1">eIF3m</shortName>
    </recommendedName>
    <alternativeName>
        <fullName evidence="1">Transport and Golgi organization protein 7</fullName>
        <shortName evidence="1">Tango-7</shortName>
    </alternativeName>
</protein>
<name>EIF3M_DROAN</name>
<dbReference type="EMBL" id="CH902619">
    <property type="protein sequence ID" value="EDV36310.1"/>
    <property type="molecule type" value="Genomic_DNA"/>
</dbReference>
<dbReference type="SMR" id="B3MCZ5"/>
<dbReference type="FunCoup" id="B3MCZ5">
    <property type="interactions" value="2291"/>
</dbReference>
<dbReference type="STRING" id="7217.B3MCZ5"/>
<dbReference type="EnsemblMetazoa" id="FBtr0117601">
    <property type="protein sequence ID" value="FBpp0116093"/>
    <property type="gene ID" value="FBgn0089935"/>
</dbReference>
<dbReference type="EnsemblMetazoa" id="XM_001959452.3">
    <property type="protein sequence ID" value="XP_001959488.1"/>
    <property type="gene ID" value="LOC6495747"/>
</dbReference>
<dbReference type="GeneID" id="6495747"/>
<dbReference type="KEGG" id="dan:6495747"/>
<dbReference type="CTD" id="10480"/>
<dbReference type="eggNOG" id="KOG2753">
    <property type="taxonomic scope" value="Eukaryota"/>
</dbReference>
<dbReference type="HOGENOM" id="CLU_035254_1_0_1"/>
<dbReference type="InParanoid" id="B3MCZ5"/>
<dbReference type="OMA" id="VCLKALW"/>
<dbReference type="OrthoDB" id="7900529at2759"/>
<dbReference type="PhylomeDB" id="B3MCZ5"/>
<dbReference type="Proteomes" id="UP000007801">
    <property type="component" value="Unassembled WGS sequence"/>
</dbReference>
<dbReference type="GO" id="GO:0005829">
    <property type="term" value="C:cytosol"/>
    <property type="evidence" value="ECO:0007669"/>
    <property type="project" value="EnsemblMetazoa"/>
</dbReference>
<dbReference type="GO" id="GO:0016282">
    <property type="term" value="C:eukaryotic 43S preinitiation complex"/>
    <property type="evidence" value="ECO:0007669"/>
    <property type="project" value="UniProtKB-UniRule"/>
</dbReference>
<dbReference type="GO" id="GO:0033290">
    <property type="term" value="C:eukaryotic 48S preinitiation complex"/>
    <property type="evidence" value="ECO:0007669"/>
    <property type="project" value="UniProtKB-UniRule"/>
</dbReference>
<dbReference type="GO" id="GO:0071541">
    <property type="term" value="C:eukaryotic translation initiation factor 3 complex, eIF3m"/>
    <property type="evidence" value="ECO:0007669"/>
    <property type="project" value="UniProtKB-UniRule"/>
</dbReference>
<dbReference type="GO" id="GO:0005794">
    <property type="term" value="C:Golgi apparatus"/>
    <property type="evidence" value="ECO:0007669"/>
    <property type="project" value="UniProtKB-SubCell"/>
</dbReference>
<dbReference type="GO" id="GO:0070865">
    <property type="term" value="C:investment cone"/>
    <property type="evidence" value="ECO:0007669"/>
    <property type="project" value="EnsemblMetazoa"/>
</dbReference>
<dbReference type="GO" id="GO:0089720">
    <property type="term" value="F:caspase binding"/>
    <property type="evidence" value="ECO:0007669"/>
    <property type="project" value="EnsemblMetazoa"/>
</dbReference>
<dbReference type="GO" id="GO:0140608">
    <property type="term" value="F:cysteine-type endopeptidase activator activity"/>
    <property type="evidence" value="ECO:0007669"/>
    <property type="project" value="EnsemblMetazoa"/>
</dbReference>
<dbReference type="GO" id="GO:0003743">
    <property type="term" value="F:translation initiation factor activity"/>
    <property type="evidence" value="ECO:0007669"/>
    <property type="project" value="UniProtKB-UniRule"/>
</dbReference>
<dbReference type="GO" id="GO:0001732">
    <property type="term" value="P:formation of cytoplasmic translation initiation complex"/>
    <property type="evidence" value="ECO:0007669"/>
    <property type="project" value="UniProtKB-UniRule"/>
</dbReference>
<dbReference type="GO" id="GO:0007030">
    <property type="term" value="P:Golgi organization"/>
    <property type="evidence" value="ECO:0007669"/>
    <property type="project" value="EnsemblMetazoa"/>
</dbReference>
<dbReference type="GO" id="GO:0009306">
    <property type="term" value="P:protein secretion"/>
    <property type="evidence" value="ECO:0007669"/>
    <property type="project" value="EnsemblMetazoa"/>
</dbReference>
<dbReference type="GO" id="GO:0007291">
    <property type="term" value="P:sperm individualization"/>
    <property type="evidence" value="ECO:0007669"/>
    <property type="project" value="EnsemblMetazoa"/>
</dbReference>
<dbReference type="HAMAP" id="MF_03012">
    <property type="entry name" value="eIF3m"/>
    <property type="match status" value="1"/>
</dbReference>
<dbReference type="InterPro" id="IPR016024">
    <property type="entry name" value="ARM-type_fold"/>
</dbReference>
<dbReference type="InterPro" id="IPR045237">
    <property type="entry name" value="COPS7/eIF3m"/>
</dbReference>
<dbReference type="InterPro" id="IPR027528">
    <property type="entry name" value="eIF3m"/>
</dbReference>
<dbReference type="InterPro" id="IPR040750">
    <property type="entry name" value="eIF3m_C_helix"/>
</dbReference>
<dbReference type="InterPro" id="IPR000717">
    <property type="entry name" value="PCI_dom"/>
</dbReference>
<dbReference type="InterPro" id="IPR036390">
    <property type="entry name" value="WH_DNA-bd_sf"/>
</dbReference>
<dbReference type="PANTHER" id="PTHR15350">
    <property type="entry name" value="COP9 SIGNALOSOME COMPLEX SUBUNIT 7/DENDRITIC CELL PROTEIN GA17"/>
    <property type="match status" value="1"/>
</dbReference>
<dbReference type="PANTHER" id="PTHR15350:SF2">
    <property type="entry name" value="EUKARYOTIC TRANSLATION INITIATION FACTOR 3 SUBUNIT M"/>
    <property type="match status" value="1"/>
</dbReference>
<dbReference type="Pfam" id="PF18005">
    <property type="entry name" value="eIF3m_C_helix"/>
    <property type="match status" value="1"/>
</dbReference>
<dbReference type="Pfam" id="PF01399">
    <property type="entry name" value="PCI"/>
    <property type="match status" value="1"/>
</dbReference>
<dbReference type="SMART" id="SM00088">
    <property type="entry name" value="PINT"/>
    <property type="match status" value="1"/>
</dbReference>
<dbReference type="SUPFAM" id="SSF48371">
    <property type="entry name" value="ARM repeat"/>
    <property type="match status" value="1"/>
</dbReference>
<dbReference type="SUPFAM" id="SSF46785">
    <property type="entry name" value="Winged helix' DNA-binding domain"/>
    <property type="match status" value="1"/>
</dbReference>
<dbReference type="PROSITE" id="PS50250">
    <property type="entry name" value="PCI"/>
    <property type="match status" value="1"/>
</dbReference>
<feature type="chain" id="PRO_0000365998" description="Eukaryotic translation initiation factor 3 subunit M">
    <location>
        <begin position="1"/>
        <end position="387"/>
    </location>
</feature>
<feature type="domain" description="PCI" evidence="2">
    <location>
        <begin position="181"/>
        <end position="340"/>
    </location>
</feature>
<accession>B3MCZ5</accession>
<gene>
    <name evidence="1" type="primary">Tango7</name>
    <name type="ORF">GF12901</name>
</gene>
<proteinExistence type="inferred from homology"/>
<comment type="function">
    <text evidence="1">Component of the eukaryotic translation initiation factor 3 (eIF-3) complex, which is involved in protein synthesis of a specialized repertoire of mRNAs and, together with other initiation factors, stimulates binding of mRNA and methionyl-tRNAi to the 40S ribosome. The eIF-3 complex specifically targets and initiates translation of a subset of mRNAs involved in cell proliferation.</text>
</comment>
<comment type="subunit">
    <text evidence="1">Component of the eukaryotic translation initiation factor 3 (eIF-3) complex. The eIF-3 complex interacts with pix.</text>
</comment>
<comment type="subcellular location">
    <subcellularLocation>
        <location evidence="1">Cytoplasm</location>
    </subcellularLocation>
    <subcellularLocation>
        <location evidence="1">Golgi apparatus</location>
    </subcellularLocation>
</comment>
<comment type="similarity">
    <text evidence="1">Belongs to the eIF-3 subunit M family.</text>
</comment>
<keyword id="KW-0963">Cytoplasm</keyword>
<keyword id="KW-0333">Golgi apparatus</keyword>
<keyword id="KW-0396">Initiation factor</keyword>
<keyword id="KW-0648">Protein biosynthesis</keyword>
<keyword id="KW-1185">Reference proteome</keyword>
<organism>
    <name type="scientific">Drosophila ananassae</name>
    <name type="common">Fruit fly</name>
    <dbReference type="NCBI Taxonomy" id="7217"/>
    <lineage>
        <taxon>Eukaryota</taxon>
        <taxon>Metazoa</taxon>
        <taxon>Ecdysozoa</taxon>
        <taxon>Arthropoda</taxon>
        <taxon>Hexapoda</taxon>
        <taxon>Insecta</taxon>
        <taxon>Pterygota</taxon>
        <taxon>Neoptera</taxon>
        <taxon>Endopterygota</taxon>
        <taxon>Diptera</taxon>
        <taxon>Brachycera</taxon>
        <taxon>Muscomorpha</taxon>
        <taxon>Ephydroidea</taxon>
        <taxon>Drosophilidae</taxon>
        <taxon>Drosophila</taxon>
        <taxon>Sophophora</taxon>
    </lineage>
</organism>
<evidence type="ECO:0000255" key="1">
    <source>
        <dbReference type="HAMAP-Rule" id="MF_03012"/>
    </source>
</evidence>
<evidence type="ECO:0000255" key="2">
    <source>
        <dbReference type="PROSITE-ProRule" id="PRU01185"/>
    </source>
</evidence>
<sequence>MTSHPVFIDLSLDEQVQELRKYFKKLGAEISSEKSNKGVEDDLHKIIGVCDVCFKDGEPSQIDGILNSIVSIMITIPLDRGENIVLAYCEKMTKAPNQPLAKVCLQSLWRLFNNLDTASPLRYHVYYHLVQVAKQCDQVLEVFTGVDQLKSQFANCPPSSEQMQKLYRLLHDVTKDTNLELSSKVMIELLGTYTADNACVAREDAMKCIVTALADPNTFLLDPLLSLKPVRFLEGDLIHDLLSIFVSDKLPSYVQFYEDHKEFVNSQGLNHEQNMKKMRLLTFMQLAESSPEMTFDTLTKELQITEDEVEPFVIEVLKTKLVRARLDQANRKVHISSTMHRTFGAPQWEQLRDLLQAWKENLSSVREGLTNVSAAQLDLARNQKLVH</sequence>
<reference key="1">
    <citation type="journal article" date="2007" name="Nature">
        <title>Evolution of genes and genomes on the Drosophila phylogeny.</title>
        <authorList>
            <consortium name="Drosophila 12 genomes consortium"/>
        </authorList>
    </citation>
    <scope>NUCLEOTIDE SEQUENCE [LARGE SCALE GENOMIC DNA]</scope>
    <source>
        <strain>Tucson 14024-0371.13</strain>
    </source>
</reference>